<gene>
    <name type="ordered locus">Mvan_5105</name>
</gene>
<protein>
    <recommendedName>
        <fullName>Peroxynitrite isomerase 2</fullName>
        <ecNumber evidence="1">5.99.-.-</ecNumber>
    </recommendedName>
    <alternativeName>
        <fullName>Ferric nitrobindin</fullName>
        <shortName>Nb(III)</shortName>
    </alternativeName>
</protein>
<evidence type="ECO:0000255" key="1">
    <source>
        <dbReference type="HAMAP-Rule" id="MF_01297"/>
    </source>
</evidence>
<keyword id="KW-0349">Heme</keyword>
<keyword id="KW-0408">Iron</keyword>
<keyword id="KW-0413">Isomerase</keyword>
<keyword id="KW-0479">Metal-binding</keyword>
<sequence>MSSGDEAVAAAAQRARVTAARNIPVFGDLPLPADTANLREGANLDDALLALLPLVGVWRGEGEGRAAHGDYRFGQQIVVSHDGGDYLNWEARSWHLDDDGEYARPGLRETGFWRFVSDPGDPEESQAIELLLAHSAGYIELFYGRPLNQSSWELVTDALARSKSGMLVGGAKRLYGIIEGGDLAYVEERVDADGGLVPHLSARLTRFVG</sequence>
<comment type="function">
    <text evidence="1">Heme-binding protein able to scavenge peroxynitrite and to protect free L-tyrosine against peroxynitrite-mediated nitration, by acting as a peroxynitrite isomerase that converts peroxynitrite to nitrate. Therefore, this protein likely plays a role in peroxynitrite sensing and in the detoxification of reactive nitrogen and oxygen species (RNS and ROS, respectively). Is able to bind nitric oxide (NO) in vitro, but may act as a sensor of peroxynitrite levels in vivo.</text>
</comment>
<comment type="catalytic activity">
    <reaction evidence="1">
        <text>peroxynitrite = nitrate</text>
        <dbReference type="Rhea" id="RHEA:63116"/>
        <dbReference type="ChEBI" id="CHEBI:17632"/>
        <dbReference type="ChEBI" id="CHEBI:25941"/>
    </reaction>
    <physiologicalReaction direction="left-to-right" evidence="1">
        <dbReference type="Rhea" id="RHEA:63117"/>
    </physiologicalReaction>
</comment>
<comment type="cofactor">
    <cofactor evidence="1">
        <name>heme b</name>
        <dbReference type="ChEBI" id="CHEBI:60344"/>
    </cofactor>
    <text evidence="1">Binds 1 heme b group per subunit, that coordinates a highly solvent-exposed Fe(III) atom.</text>
</comment>
<comment type="pathway">
    <text evidence="1">Nitrogen metabolism.</text>
</comment>
<comment type="subunit">
    <text evidence="1">Homodimer.</text>
</comment>
<comment type="domain">
    <text evidence="1">Forms a 10-stranded antiparallel beta-barrel structure able to accommodate a hydrophobic ligand in its interior. In fact, this fold hosts the heme group, which is located in a wide surface cleft.</text>
</comment>
<comment type="similarity">
    <text evidence="1">Belongs to the nitrobindin family.</text>
</comment>
<name>NB2_MYCVP</name>
<accession>A1TFC6</accession>
<organism>
    <name type="scientific">Mycolicibacterium vanbaalenii (strain DSM 7251 / JCM 13017 / BCRC 16820 / KCTC 9966 / NRRL B-24157 / PYR-1)</name>
    <name type="common">Mycobacterium vanbaalenii</name>
    <dbReference type="NCBI Taxonomy" id="350058"/>
    <lineage>
        <taxon>Bacteria</taxon>
        <taxon>Bacillati</taxon>
        <taxon>Actinomycetota</taxon>
        <taxon>Actinomycetes</taxon>
        <taxon>Mycobacteriales</taxon>
        <taxon>Mycobacteriaceae</taxon>
        <taxon>Mycolicibacterium</taxon>
    </lineage>
</organism>
<proteinExistence type="inferred from homology"/>
<feature type="chain" id="PRO_0000356940" description="Peroxynitrite isomerase 2">
    <location>
        <begin position="1"/>
        <end position="209"/>
    </location>
</feature>
<feature type="short sequence motif" description="GXWXGXG" evidence="1">
    <location>
        <begin position="56"/>
        <end position="62"/>
    </location>
</feature>
<feature type="binding site" evidence="1">
    <location>
        <position position="172"/>
    </location>
    <ligand>
        <name>heme b</name>
        <dbReference type="ChEBI" id="CHEBI:60344"/>
    </ligand>
</feature>
<feature type="binding site" description="axial binding residue" evidence="1">
    <location>
        <position position="199"/>
    </location>
    <ligand>
        <name>heme b</name>
        <dbReference type="ChEBI" id="CHEBI:60344"/>
    </ligand>
    <ligandPart>
        <name>Fe</name>
        <dbReference type="ChEBI" id="CHEBI:18248"/>
    </ligandPart>
</feature>
<dbReference type="EC" id="5.99.-.-" evidence="1"/>
<dbReference type="EMBL" id="CP000511">
    <property type="protein sequence ID" value="ABM15876.1"/>
    <property type="molecule type" value="Genomic_DNA"/>
</dbReference>
<dbReference type="RefSeq" id="WP_011782246.1">
    <property type="nucleotide sequence ID" value="NZ_JACKSD010000224.1"/>
</dbReference>
<dbReference type="SMR" id="A1TFC6"/>
<dbReference type="STRING" id="350058.Mvan_5105"/>
<dbReference type="KEGG" id="mva:Mvan_5105"/>
<dbReference type="eggNOG" id="COG4044">
    <property type="taxonomic scope" value="Bacteria"/>
</dbReference>
<dbReference type="HOGENOM" id="CLU_085483_0_0_11"/>
<dbReference type="Proteomes" id="UP000009159">
    <property type="component" value="Chromosome"/>
</dbReference>
<dbReference type="GO" id="GO:0020037">
    <property type="term" value="F:heme binding"/>
    <property type="evidence" value="ECO:0007669"/>
    <property type="project" value="UniProtKB-UniRule"/>
</dbReference>
<dbReference type="GO" id="GO:0046872">
    <property type="term" value="F:metal ion binding"/>
    <property type="evidence" value="ECO:0007669"/>
    <property type="project" value="UniProtKB-KW"/>
</dbReference>
<dbReference type="GO" id="GO:0062213">
    <property type="term" value="F:peroxynitrite isomerase activity"/>
    <property type="evidence" value="ECO:0007669"/>
    <property type="project" value="UniProtKB-UniRule"/>
</dbReference>
<dbReference type="CDD" id="cd07828">
    <property type="entry name" value="lipocalin_heme-bd-THAP4-like"/>
    <property type="match status" value="1"/>
</dbReference>
<dbReference type="Gene3D" id="2.40.128.20">
    <property type="match status" value="1"/>
</dbReference>
<dbReference type="HAMAP" id="MF_01297">
    <property type="entry name" value="nitrobindin"/>
    <property type="match status" value="1"/>
</dbReference>
<dbReference type="InterPro" id="IPR012674">
    <property type="entry name" value="Calycin"/>
</dbReference>
<dbReference type="InterPro" id="IPR022939">
    <property type="entry name" value="Nb(III)_bact/plant"/>
</dbReference>
<dbReference type="InterPro" id="IPR045165">
    <property type="entry name" value="Nitrobindin"/>
</dbReference>
<dbReference type="InterPro" id="IPR014878">
    <property type="entry name" value="THAP4-like_heme-bd"/>
</dbReference>
<dbReference type="PANTHER" id="PTHR15854:SF4">
    <property type="entry name" value="PEROXYNITRITE ISOMERASE THAP4"/>
    <property type="match status" value="1"/>
</dbReference>
<dbReference type="PANTHER" id="PTHR15854">
    <property type="entry name" value="THAP4 PROTEIN"/>
    <property type="match status" value="1"/>
</dbReference>
<dbReference type="Pfam" id="PF08768">
    <property type="entry name" value="THAP4_heme-bd"/>
    <property type="match status" value="1"/>
</dbReference>
<dbReference type="SUPFAM" id="SSF50814">
    <property type="entry name" value="Lipocalins"/>
    <property type="match status" value="1"/>
</dbReference>
<reference key="1">
    <citation type="submission" date="2006-12" db="EMBL/GenBank/DDBJ databases">
        <title>Complete sequence of Mycobacterium vanbaalenii PYR-1.</title>
        <authorList>
            <consortium name="US DOE Joint Genome Institute"/>
            <person name="Copeland A."/>
            <person name="Lucas S."/>
            <person name="Lapidus A."/>
            <person name="Barry K."/>
            <person name="Detter J.C."/>
            <person name="Glavina del Rio T."/>
            <person name="Hammon N."/>
            <person name="Israni S."/>
            <person name="Dalin E."/>
            <person name="Tice H."/>
            <person name="Pitluck S."/>
            <person name="Singan V."/>
            <person name="Schmutz J."/>
            <person name="Larimer F."/>
            <person name="Land M."/>
            <person name="Hauser L."/>
            <person name="Kyrpides N."/>
            <person name="Anderson I.J."/>
            <person name="Miller C."/>
            <person name="Richardson P."/>
        </authorList>
    </citation>
    <scope>NUCLEOTIDE SEQUENCE [LARGE SCALE GENOMIC DNA]</scope>
    <source>
        <strain>DSM 7251 / JCM 13017 / BCRC 16820 / KCTC 9966 / NRRL B-24157 / PYR-1</strain>
    </source>
</reference>